<sequence>MSKPFKLNSAFKPSGDQPDAIRRLEEGLEDGLAHQTLLGVTGSGKTFTIANVIADLQRPTMVLAPNKTLAAQLYGEMKEFFPENAVEYFVSYYDYYQPEAYVPSSDTFIEKDASVNEHIEQMRLSATKALLERRDVVVVASVSAIYGLGDPDLYLKMMLHLTVGMLIDQRAILRRLAELQYTRNDQAFQRGTFRVRGEVIDIFPAESDDIALRVELFDEEVERLSLFDPLTGQVESTVPRYTIYPKTHYVTPRERILQAMEEIKDELADRRKVLLANNKLLEEQRLSQRTQFDLEMMNELGYCSGIENYSRFLSGRGPGEPPPTLFDYLPADGLLVVDESHVTIPQIGGMYRGDRARKETLVEYGFRLPSALDNRPLKFEEFEALAPQTIYVSATPGNYELEKSGDEVVDQVVRPTGLLDPIIEVRPVATQVDDLLSEIRQRAAINERVLVTTLTKRMAEDLTEYLEEHGERVRYLHSDIDTVERMEIIRDLRLGEFDVLVGINLLREGLDMPEVSLVAILDADKEGFLRSERSLIQTIGRAARNVNGKAILYGDKITPSMAKAIGETERRREKQQKYNEEHGITPQGLNKKVVDILALGQNIAKTKAKGKGKGRSTAKAGIVELDMTPKALQQKIHELEGQMMQHAQNLEFEEAAQIRDQLHQLRELFIAAS</sequence>
<proteinExistence type="inferred from homology"/>
<reference key="1">
    <citation type="journal article" date="2011" name="J. Bacteriol.">
        <title>Comparative genomics of 28 Salmonella enterica isolates: evidence for CRISPR-mediated adaptive sublineage evolution.</title>
        <authorList>
            <person name="Fricke W.F."/>
            <person name="Mammel M.K."/>
            <person name="McDermott P.F."/>
            <person name="Tartera C."/>
            <person name="White D.G."/>
            <person name="Leclerc J.E."/>
            <person name="Ravel J."/>
            <person name="Cebula T.A."/>
        </authorList>
    </citation>
    <scope>NUCLEOTIDE SEQUENCE [LARGE SCALE GENOMIC DNA]</scope>
    <source>
        <strain>SL254</strain>
    </source>
</reference>
<gene>
    <name evidence="1" type="primary">uvrB</name>
    <name type="ordered locus">SNSL254_A0862</name>
</gene>
<evidence type="ECO:0000255" key="1">
    <source>
        <dbReference type="HAMAP-Rule" id="MF_00204"/>
    </source>
</evidence>
<dbReference type="EMBL" id="CP001113">
    <property type="protein sequence ID" value="ACF63970.1"/>
    <property type="molecule type" value="Genomic_DNA"/>
</dbReference>
<dbReference type="RefSeq" id="WP_000042502.1">
    <property type="nucleotide sequence ID" value="NZ_CCMR01000003.1"/>
</dbReference>
<dbReference type="SMR" id="B4SZK1"/>
<dbReference type="KEGG" id="see:SNSL254_A0862"/>
<dbReference type="HOGENOM" id="CLU_009621_2_1_6"/>
<dbReference type="Proteomes" id="UP000008824">
    <property type="component" value="Chromosome"/>
</dbReference>
<dbReference type="GO" id="GO:0005737">
    <property type="term" value="C:cytoplasm"/>
    <property type="evidence" value="ECO:0007669"/>
    <property type="project" value="UniProtKB-SubCell"/>
</dbReference>
<dbReference type="GO" id="GO:0009380">
    <property type="term" value="C:excinuclease repair complex"/>
    <property type="evidence" value="ECO:0007669"/>
    <property type="project" value="InterPro"/>
</dbReference>
<dbReference type="GO" id="GO:0005524">
    <property type="term" value="F:ATP binding"/>
    <property type="evidence" value="ECO:0007669"/>
    <property type="project" value="UniProtKB-UniRule"/>
</dbReference>
<dbReference type="GO" id="GO:0016887">
    <property type="term" value="F:ATP hydrolysis activity"/>
    <property type="evidence" value="ECO:0007669"/>
    <property type="project" value="InterPro"/>
</dbReference>
<dbReference type="GO" id="GO:0003677">
    <property type="term" value="F:DNA binding"/>
    <property type="evidence" value="ECO:0007669"/>
    <property type="project" value="UniProtKB-UniRule"/>
</dbReference>
<dbReference type="GO" id="GO:0009381">
    <property type="term" value="F:excinuclease ABC activity"/>
    <property type="evidence" value="ECO:0007669"/>
    <property type="project" value="UniProtKB-UniRule"/>
</dbReference>
<dbReference type="GO" id="GO:0004386">
    <property type="term" value="F:helicase activity"/>
    <property type="evidence" value="ECO:0007669"/>
    <property type="project" value="UniProtKB-KW"/>
</dbReference>
<dbReference type="GO" id="GO:0006289">
    <property type="term" value="P:nucleotide-excision repair"/>
    <property type="evidence" value="ECO:0007669"/>
    <property type="project" value="UniProtKB-UniRule"/>
</dbReference>
<dbReference type="GO" id="GO:0009432">
    <property type="term" value="P:SOS response"/>
    <property type="evidence" value="ECO:0007669"/>
    <property type="project" value="UniProtKB-UniRule"/>
</dbReference>
<dbReference type="CDD" id="cd17916">
    <property type="entry name" value="DEXHc_UvrB"/>
    <property type="match status" value="1"/>
</dbReference>
<dbReference type="CDD" id="cd18790">
    <property type="entry name" value="SF2_C_UvrB"/>
    <property type="match status" value="1"/>
</dbReference>
<dbReference type="FunFam" id="3.40.50.300:FF:000257">
    <property type="entry name" value="UvrABC system protein B"/>
    <property type="match status" value="1"/>
</dbReference>
<dbReference type="FunFam" id="3.40.50.300:FF:000401">
    <property type="entry name" value="UvrABC system protein B"/>
    <property type="match status" value="1"/>
</dbReference>
<dbReference type="FunFam" id="3.40.50.300:FF:000477">
    <property type="entry name" value="UvrABC system protein B"/>
    <property type="match status" value="1"/>
</dbReference>
<dbReference type="Gene3D" id="6.10.140.240">
    <property type="match status" value="1"/>
</dbReference>
<dbReference type="Gene3D" id="3.40.50.300">
    <property type="entry name" value="P-loop containing nucleotide triphosphate hydrolases"/>
    <property type="match status" value="3"/>
</dbReference>
<dbReference type="Gene3D" id="4.10.860.10">
    <property type="entry name" value="UVR domain"/>
    <property type="match status" value="1"/>
</dbReference>
<dbReference type="HAMAP" id="MF_00204">
    <property type="entry name" value="UvrB"/>
    <property type="match status" value="1"/>
</dbReference>
<dbReference type="InterPro" id="IPR006935">
    <property type="entry name" value="Helicase/UvrB_N"/>
</dbReference>
<dbReference type="InterPro" id="IPR014001">
    <property type="entry name" value="Helicase_ATP-bd"/>
</dbReference>
<dbReference type="InterPro" id="IPR001650">
    <property type="entry name" value="Helicase_C-like"/>
</dbReference>
<dbReference type="InterPro" id="IPR027417">
    <property type="entry name" value="P-loop_NTPase"/>
</dbReference>
<dbReference type="InterPro" id="IPR001943">
    <property type="entry name" value="UVR_dom"/>
</dbReference>
<dbReference type="InterPro" id="IPR036876">
    <property type="entry name" value="UVR_dom_sf"/>
</dbReference>
<dbReference type="InterPro" id="IPR004807">
    <property type="entry name" value="UvrB"/>
</dbReference>
<dbReference type="InterPro" id="IPR041471">
    <property type="entry name" value="UvrB_inter"/>
</dbReference>
<dbReference type="InterPro" id="IPR024759">
    <property type="entry name" value="UvrB_YAD/RRR_dom"/>
</dbReference>
<dbReference type="NCBIfam" id="NF003673">
    <property type="entry name" value="PRK05298.1"/>
    <property type="match status" value="1"/>
</dbReference>
<dbReference type="NCBIfam" id="TIGR00631">
    <property type="entry name" value="uvrb"/>
    <property type="match status" value="1"/>
</dbReference>
<dbReference type="PANTHER" id="PTHR24029">
    <property type="entry name" value="UVRABC SYSTEM PROTEIN B"/>
    <property type="match status" value="1"/>
</dbReference>
<dbReference type="PANTHER" id="PTHR24029:SF0">
    <property type="entry name" value="UVRABC SYSTEM PROTEIN B"/>
    <property type="match status" value="1"/>
</dbReference>
<dbReference type="Pfam" id="PF00271">
    <property type="entry name" value="Helicase_C"/>
    <property type="match status" value="1"/>
</dbReference>
<dbReference type="Pfam" id="PF04851">
    <property type="entry name" value="ResIII"/>
    <property type="match status" value="1"/>
</dbReference>
<dbReference type="Pfam" id="PF02151">
    <property type="entry name" value="UVR"/>
    <property type="match status" value="1"/>
</dbReference>
<dbReference type="Pfam" id="PF12344">
    <property type="entry name" value="UvrB"/>
    <property type="match status" value="1"/>
</dbReference>
<dbReference type="Pfam" id="PF17757">
    <property type="entry name" value="UvrB_inter"/>
    <property type="match status" value="1"/>
</dbReference>
<dbReference type="SMART" id="SM00487">
    <property type="entry name" value="DEXDc"/>
    <property type="match status" value="1"/>
</dbReference>
<dbReference type="SMART" id="SM00490">
    <property type="entry name" value="HELICc"/>
    <property type="match status" value="1"/>
</dbReference>
<dbReference type="SUPFAM" id="SSF46600">
    <property type="entry name" value="C-terminal UvrC-binding domain of UvrB"/>
    <property type="match status" value="1"/>
</dbReference>
<dbReference type="SUPFAM" id="SSF52540">
    <property type="entry name" value="P-loop containing nucleoside triphosphate hydrolases"/>
    <property type="match status" value="2"/>
</dbReference>
<dbReference type="PROSITE" id="PS51192">
    <property type="entry name" value="HELICASE_ATP_BIND_1"/>
    <property type="match status" value="1"/>
</dbReference>
<dbReference type="PROSITE" id="PS51194">
    <property type="entry name" value="HELICASE_CTER"/>
    <property type="match status" value="1"/>
</dbReference>
<dbReference type="PROSITE" id="PS50151">
    <property type="entry name" value="UVR"/>
    <property type="match status" value="1"/>
</dbReference>
<accession>B4SZK1</accession>
<comment type="function">
    <text evidence="1">The UvrABC repair system catalyzes the recognition and processing of DNA lesions. A damage recognition complex composed of 2 UvrA and 2 UvrB subunits scans DNA for abnormalities. Upon binding of the UvrA(2)B(2) complex to a putative damaged site, the DNA wraps around one UvrB monomer. DNA wrap is dependent on ATP binding by UvrB and probably causes local melting of the DNA helix, facilitating insertion of UvrB beta-hairpin between the DNA strands. Then UvrB probes one DNA strand for the presence of a lesion. If a lesion is found the UvrA subunits dissociate and the UvrB-DNA preincision complex is formed. This complex is subsequently bound by UvrC and the second UvrB is released. If no lesion is found, the DNA wraps around the other UvrB subunit that will check the other stand for damage.</text>
</comment>
<comment type="subunit">
    <text evidence="1">Forms a heterotetramer with UvrA during the search for lesions. Interacts with UvrC in an incision complex.</text>
</comment>
<comment type="subcellular location">
    <subcellularLocation>
        <location evidence="1">Cytoplasm</location>
    </subcellularLocation>
</comment>
<comment type="domain">
    <text evidence="1">The beta-hairpin motif is involved in DNA binding.</text>
</comment>
<comment type="similarity">
    <text evidence="1">Belongs to the UvrB family.</text>
</comment>
<protein>
    <recommendedName>
        <fullName evidence="1">UvrABC system protein B</fullName>
        <shortName evidence="1">Protein UvrB</shortName>
    </recommendedName>
    <alternativeName>
        <fullName evidence="1">Excinuclease ABC subunit B</fullName>
    </alternativeName>
</protein>
<keyword id="KW-0067">ATP-binding</keyword>
<keyword id="KW-0963">Cytoplasm</keyword>
<keyword id="KW-0227">DNA damage</keyword>
<keyword id="KW-0228">DNA excision</keyword>
<keyword id="KW-0234">DNA repair</keyword>
<keyword id="KW-0267">Excision nuclease</keyword>
<keyword id="KW-0347">Helicase</keyword>
<keyword id="KW-0378">Hydrolase</keyword>
<keyword id="KW-0547">Nucleotide-binding</keyword>
<keyword id="KW-0742">SOS response</keyword>
<name>UVRB_SALNS</name>
<feature type="chain" id="PRO_1000099565" description="UvrABC system protein B">
    <location>
        <begin position="1"/>
        <end position="673"/>
    </location>
</feature>
<feature type="domain" description="Helicase ATP-binding" evidence="1">
    <location>
        <begin position="26"/>
        <end position="183"/>
    </location>
</feature>
<feature type="domain" description="Helicase C-terminal" evidence="1">
    <location>
        <begin position="431"/>
        <end position="597"/>
    </location>
</feature>
<feature type="domain" description="UVR" evidence="1">
    <location>
        <begin position="633"/>
        <end position="668"/>
    </location>
</feature>
<feature type="short sequence motif" description="Beta-hairpin">
    <location>
        <begin position="92"/>
        <end position="115"/>
    </location>
</feature>
<feature type="binding site" evidence="1">
    <location>
        <begin position="39"/>
        <end position="46"/>
    </location>
    <ligand>
        <name>ATP</name>
        <dbReference type="ChEBI" id="CHEBI:30616"/>
    </ligand>
</feature>
<organism>
    <name type="scientific">Salmonella newport (strain SL254)</name>
    <dbReference type="NCBI Taxonomy" id="423368"/>
    <lineage>
        <taxon>Bacteria</taxon>
        <taxon>Pseudomonadati</taxon>
        <taxon>Pseudomonadota</taxon>
        <taxon>Gammaproteobacteria</taxon>
        <taxon>Enterobacterales</taxon>
        <taxon>Enterobacteriaceae</taxon>
        <taxon>Salmonella</taxon>
    </lineage>
</organism>